<keyword id="KW-0963">Cytoplasm</keyword>
<keyword id="KW-0378">Hydrolase</keyword>
<keyword id="KW-0460">Magnesium</keyword>
<keyword id="KW-0479">Metal-binding</keyword>
<proteinExistence type="inferred from homology"/>
<gene>
    <name evidence="1" type="primary">ppa</name>
    <name type="ordered locus">XAC3442</name>
</gene>
<accession>Q8PH18</accession>
<dbReference type="EC" id="3.6.1.1" evidence="1"/>
<dbReference type="EMBL" id="AE008923">
    <property type="protein sequence ID" value="AAM38285.1"/>
    <property type="molecule type" value="Genomic_DNA"/>
</dbReference>
<dbReference type="RefSeq" id="WP_005911986.1">
    <property type="nucleotide sequence ID" value="NC_003919.1"/>
</dbReference>
<dbReference type="SMR" id="Q8PH18"/>
<dbReference type="GeneID" id="97511637"/>
<dbReference type="KEGG" id="xac:XAC3442"/>
<dbReference type="eggNOG" id="COG0221">
    <property type="taxonomic scope" value="Bacteria"/>
</dbReference>
<dbReference type="HOGENOM" id="CLU_073198_1_0_6"/>
<dbReference type="Proteomes" id="UP000000576">
    <property type="component" value="Chromosome"/>
</dbReference>
<dbReference type="GO" id="GO:0005737">
    <property type="term" value="C:cytoplasm"/>
    <property type="evidence" value="ECO:0007669"/>
    <property type="project" value="UniProtKB-SubCell"/>
</dbReference>
<dbReference type="GO" id="GO:0004427">
    <property type="term" value="F:inorganic diphosphate phosphatase activity"/>
    <property type="evidence" value="ECO:0007669"/>
    <property type="project" value="UniProtKB-UniRule"/>
</dbReference>
<dbReference type="GO" id="GO:0000287">
    <property type="term" value="F:magnesium ion binding"/>
    <property type="evidence" value="ECO:0007669"/>
    <property type="project" value="UniProtKB-UniRule"/>
</dbReference>
<dbReference type="GO" id="GO:0006796">
    <property type="term" value="P:phosphate-containing compound metabolic process"/>
    <property type="evidence" value="ECO:0007669"/>
    <property type="project" value="InterPro"/>
</dbReference>
<dbReference type="CDD" id="cd00412">
    <property type="entry name" value="pyrophosphatase"/>
    <property type="match status" value="1"/>
</dbReference>
<dbReference type="FunFam" id="3.90.80.10:FF:000001">
    <property type="entry name" value="Inorganic pyrophosphatase"/>
    <property type="match status" value="1"/>
</dbReference>
<dbReference type="Gene3D" id="3.90.80.10">
    <property type="entry name" value="Inorganic pyrophosphatase"/>
    <property type="match status" value="1"/>
</dbReference>
<dbReference type="HAMAP" id="MF_00209">
    <property type="entry name" value="Inorganic_PPase"/>
    <property type="match status" value="1"/>
</dbReference>
<dbReference type="InterPro" id="IPR008162">
    <property type="entry name" value="Pyrophosphatase"/>
</dbReference>
<dbReference type="InterPro" id="IPR036649">
    <property type="entry name" value="Pyrophosphatase_sf"/>
</dbReference>
<dbReference type="NCBIfam" id="NF002317">
    <property type="entry name" value="PRK01250.1"/>
    <property type="match status" value="1"/>
</dbReference>
<dbReference type="PANTHER" id="PTHR10286">
    <property type="entry name" value="INORGANIC PYROPHOSPHATASE"/>
    <property type="match status" value="1"/>
</dbReference>
<dbReference type="Pfam" id="PF00719">
    <property type="entry name" value="Pyrophosphatase"/>
    <property type="match status" value="1"/>
</dbReference>
<dbReference type="SUPFAM" id="SSF50324">
    <property type="entry name" value="Inorganic pyrophosphatase"/>
    <property type="match status" value="1"/>
</dbReference>
<organism>
    <name type="scientific">Xanthomonas axonopodis pv. citri (strain 306)</name>
    <dbReference type="NCBI Taxonomy" id="190486"/>
    <lineage>
        <taxon>Bacteria</taxon>
        <taxon>Pseudomonadati</taxon>
        <taxon>Pseudomonadota</taxon>
        <taxon>Gammaproteobacteria</taxon>
        <taxon>Lysobacterales</taxon>
        <taxon>Lysobacteraceae</taxon>
        <taxon>Xanthomonas</taxon>
    </lineage>
</organism>
<protein>
    <recommendedName>
        <fullName evidence="1">Inorganic pyrophosphatase</fullName>
        <ecNumber evidence="1">3.6.1.1</ecNumber>
    </recommendedName>
    <alternativeName>
        <fullName evidence="1">Pyrophosphate phospho-hydrolase</fullName>
        <shortName evidence="1">PPase</shortName>
    </alternativeName>
</protein>
<reference key="1">
    <citation type="journal article" date="2002" name="Nature">
        <title>Comparison of the genomes of two Xanthomonas pathogens with differing host specificities.</title>
        <authorList>
            <person name="da Silva A.C.R."/>
            <person name="Ferro J.A."/>
            <person name="Reinach F.C."/>
            <person name="Farah C.S."/>
            <person name="Furlan L.R."/>
            <person name="Quaggio R.B."/>
            <person name="Monteiro-Vitorello C.B."/>
            <person name="Van Sluys M.A."/>
            <person name="Almeida N.F. Jr."/>
            <person name="Alves L.M.C."/>
            <person name="do Amaral A.M."/>
            <person name="Bertolini M.C."/>
            <person name="Camargo L.E.A."/>
            <person name="Camarotte G."/>
            <person name="Cannavan F."/>
            <person name="Cardozo J."/>
            <person name="Chambergo F."/>
            <person name="Ciapina L.P."/>
            <person name="Cicarelli R.M.B."/>
            <person name="Coutinho L.L."/>
            <person name="Cursino-Santos J.R."/>
            <person name="El-Dorry H."/>
            <person name="Faria J.B."/>
            <person name="Ferreira A.J.S."/>
            <person name="Ferreira R.C.C."/>
            <person name="Ferro M.I.T."/>
            <person name="Formighieri E.F."/>
            <person name="Franco M.C."/>
            <person name="Greggio C.C."/>
            <person name="Gruber A."/>
            <person name="Katsuyama A.M."/>
            <person name="Kishi L.T."/>
            <person name="Leite R.P."/>
            <person name="Lemos E.G.M."/>
            <person name="Lemos M.V.F."/>
            <person name="Locali E.C."/>
            <person name="Machado M.A."/>
            <person name="Madeira A.M.B.N."/>
            <person name="Martinez-Rossi N.M."/>
            <person name="Martins E.C."/>
            <person name="Meidanis J."/>
            <person name="Menck C.F.M."/>
            <person name="Miyaki C.Y."/>
            <person name="Moon D.H."/>
            <person name="Moreira L.M."/>
            <person name="Novo M.T.M."/>
            <person name="Okura V.K."/>
            <person name="Oliveira M.C."/>
            <person name="Oliveira V.R."/>
            <person name="Pereira H.A."/>
            <person name="Rossi A."/>
            <person name="Sena J.A.D."/>
            <person name="Silva C."/>
            <person name="de Souza R.F."/>
            <person name="Spinola L.A.F."/>
            <person name="Takita M.A."/>
            <person name="Tamura R.E."/>
            <person name="Teixeira E.C."/>
            <person name="Tezza R.I.D."/>
            <person name="Trindade dos Santos M."/>
            <person name="Truffi D."/>
            <person name="Tsai S.M."/>
            <person name="White F.F."/>
            <person name="Setubal J.C."/>
            <person name="Kitajima J.P."/>
        </authorList>
    </citation>
    <scope>NUCLEOTIDE SEQUENCE [LARGE SCALE GENOMIC DNA]</scope>
    <source>
        <strain>306</strain>
    </source>
</reference>
<sequence length="178" mass="19714">MGLELVTSGKNLPEEINVVIEIPKDSEPVKYEVDKASGAIFVDRILSTPMRYPCNYGYVPNTLCGDGDPADVLVVLPLPLVPGSVVRCRPVGVLRMSDEAGSDEKILAVPIEKIFSGYAHIEDINQVSSHWMERIGHFFEHYKDLEKGKWVKLDGWGGAAEAKRILTESVERYNSDAP</sequence>
<feature type="chain" id="PRO_0000137541" description="Inorganic pyrophosphatase">
    <location>
        <begin position="1"/>
        <end position="178"/>
    </location>
</feature>
<feature type="binding site" evidence="1">
    <location>
        <position position="30"/>
    </location>
    <ligand>
        <name>substrate</name>
    </ligand>
</feature>
<feature type="binding site" evidence="1">
    <location>
        <position position="44"/>
    </location>
    <ligand>
        <name>substrate</name>
    </ligand>
</feature>
<feature type="binding site" evidence="1">
    <location>
        <position position="56"/>
    </location>
    <ligand>
        <name>substrate</name>
    </ligand>
</feature>
<feature type="binding site" evidence="1">
    <location>
        <position position="66"/>
    </location>
    <ligand>
        <name>Mg(2+)</name>
        <dbReference type="ChEBI" id="CHEBI:18420"/>
        <label>1</label>
    </ligand>
</feature>
<feature type="binding site" evidence="1">
    <location>
        <position position="71"/>
    </location>
    <ligand>
        <name>Mg(2+)</name>
        <dbReference type="ChEBI" id="CHEBI:18420"/>
        <label>1</label>
    </ligand>
</feature>
<feature type="binding site" evidence="1">
    <location>
        <position position="71"/>
    </location>
    <ligand>
        <name>Mg(2+)</name>
        <dbReference type="ChEBI" id="CHEBI:18420"/>
        <label>2</label>
    </ligand>
</feature>
<feature type="binding site" evidence="1">
    <location>
        <position position="103"/>
    </location>
    <ligand>
        <name>Mg(2+)</name>
        <dbReference type="ChEBI" id="CHEBI:18420"/>
        <label>1</label>
    </ligand>
</feature>
<feature type="binding site" evidence="1">
    <location>
        <position position="142"/>
    </location>
    <ligand>
        <name>substrate</name>
    </ligand>
</feature>
<comment type="function">
    <text evidence="1">Catalyzes the hydrolysis of inorganic pyrophosphate (PPi) forming two phosphate ions.</text>
</comment>
<comment type="catalytic activity">
    <reaction evidence="1">
        <text>diphosphate + H2O = 2 phosphate + H(+)</text>
        <dbReference type="Rhea" id="RHEA:24576"/>
        <dbReference type="ChEBI" id="CHEBI:15377"/>
        <dbReference type="ChEBI" id="CHEBI:15378"/>
        <dbReference type="ChEBI" id="CHEBI:33019"/>
        <dbReference type="ChEBI" id="CHEBI:43474"/>
        <dbReference type="EC" id="3.6.1.1"/>
    </reaction>
</comment>
<comment type="cofactor">
    <cofactor evidence="1">
        <name>Mg(2+)</name>
        <dbReference type="ChEBI" id="CHEBI:18420"/>
    </cofactor>
</comment>
<comment type="subunit">
    <text evidence="1">Homohexamer.</text>
</comment>
<comment type="subcellular location">
    <subcellularLocation>
        <location evidence="1">Cytoplasm</location>
    </subcellularLocation>
</comment>
<comment type="similarity">
    <text evidence="1">Belongs to the PPase family.</text>
</comment>
<evidence type="ECO:0000255" key="1">
    <source>
        <dbReference type="HAMAP-Rule" id="MF_00209"/>
    </source>
</evidence>
<name>IPYR_XANAC</name>